<accession>Q96456</accession>
<reference key="1">
    <citation type="submission" date="1996-09" db="EMBL/GenBank/DDBJ databases">
        <title>Sunflower stearoyl-ACP desaturase.</title>
        <authorList>
            <person name="Coughlan S.J."/>
            <person name="Hastings C.E."/>
            <person name="Winfrey R.J."/>
        </authorList>
    </citation>
    <scope>NUCLEOTIDE SEQUENCE [MRNA]</scope>
    <source>
        <strain>cv. SMF3</strain>
    </source>
</reference>
<protein>
    <recommendedName>
        <fullName>Stearoyl-[acyl-carrier-protein] 9-desaturase, chloroplastic</fullName>
        <shortName>Stearoyl-ACP desaturase</shortName>
        <ecNumber evidence="2">1.14.19.2</ecNumber>
    </recommendedName>
    <alternativeName>
        <fullName>Acyl-[acyl-carrier-protein] desaturase</fullName>
    </alternativeName>
</protein>
<comment type="function">
    <text evidence="2">Converts stearoyl-ACP to oleoyl-ACP by introduction of a cis double bond between carbons 9 and 10 of the acyl chain.</text>
</comment>
<comment type="catalytic activity">
    <reaction evidence="2">
        <text>octadecanoyl-[ACP] + 2 reduced [2Fe-2S]-[ferredoxin] + O2 + 2 H(+) = (9Z)-octadecenoyl-[ACP] + 2 oxidized [2Fe-2S]-[ferredoxin] + 2 H2O</text>
        <dbReference type="Rhea" id="RHEA:11776"/>
        <dbReference type="Rhea" id="RHEA-COMP:9656"/>
        <dbReference type="Rhea" id="RHEA-COMP:9924"/>
        <dbReference type="Rhea" id="RHEA-COMP:10000"/>
        <dbReference type="Rhea" id="RHEA-COMP:10001"/>
        <dbReference type="ChEBI" id="CHEBI:15377"/>
        <dbReference type="ChEBI" id="CHEBI:15378"/>
        <dbReference type="ChEBI" id="CHEBI:15379"/>
        <dbReference type="ChEBI" id="CHEBI:33737"/>
        <dbReference type="ChEBI" id="CHEBI:33738"/>
        <dbReference type="ChEBI" id="CHEBI:78495"/>
        <dbReference type="ChEBI" id="CHEBI:78783"/>
        <dbReference type="EC" id="1.14.19.2"/>
    </reaction>
</comment>
<comment type="cofactor">
    <cofactor evidence="2">
        <name>Fe(2+)</name>
        <dbReference type="ChEBI" id="CHEBI:29033"/>
    </cofactor>
    <text evidence="2">Binds 2 Fe(2+) ions per subunit.</text>
</comment>
<comment type="pathway">
    <text>Lipid metabolism; fatty acid metabolism.</text>
</comment>
<comment type="subunit">
    <text evidence="2">Homodimer.</text>
</comment>
<comment type="subcellular location">
    <subcellularLocation>
        <location evidence="2">Plastid</location>
        <location evidence="2">Chloroplast</location>
    </subcellularLocation>
    <subcellularLocation>
        <location evidence="2">Plastid</location>
    </subcellularLocation>
    <text>In green tissue, found in chloroplasts. In non-photosynthetic tissue, found in plastids.</text>
</comment>
<comment type="similarity">
    <text evidence="3">Belongs to the fatty acid desaturase type 2 family.</text>
</comment>
<proteinExistence type="evidence at transcript level"/>
<name>STAD_HELAN</name>
<dbReference type="EC" id="1.14.19.2" evidence="2"/>
<dbReference type="EMBL" id="U70374">
    <property type="protein sequence ID" value="AAB09571.1"/>
    <property type="molecule type" value="mRNA"/>
</dbReference>
<dbReference type="PIR" id="T14172">
    <property type="entry name" value="T14172"/>
</dbReference>
<dbReference type="SMR" id="Q96456"/>
<dbReference type="UniPathway" id="UPA00199"/>
<dbReference type="GO" id="GO:0009507">
    <property type="term" value="C:chloroplast"/>
    <property type="evidence" value="ECO:0007669"/>
    <property type="project" value="UniProtKB-SubCell"/>
</dbReference>
<dbReference type="GO" id="GO:0046872">
    <property type="term" value="F:metal ion binding"/>
    <property type="evidence" value="ECO:0007669"/>
    <property type="project" value="UniProtKB-KW"/>
</dbReference>
<dbReference type="GO" id="GO:0045300">
    <property type="term" value="F:stearoyl-[ACP] desaturase activity"/>
    <property type="evidence" value="ECO:0007669"/>
    <property type="project" value="UniProtKB-EC"/>
</dbReference>
<dbReference type="GO" id="GO:0006633">
    <property type="term" value="P:fatty acid biosynthetic process"/>
    <property type="evidence" value="ECO:0007669"/>
    <property type="project" value="UniProtKB-KW"/>
</dbReference>
<dbReference type="CDD" id="cd01050">
    <property type="entry name" value="Acyl_ACP_Desat"/>
    <property type="match status" value="1"/>
</dbReference>
<dbReference type="FunFam" id="1.10.620.20:FF:000002">
    <property type="entry name" value="Stearoyl-[acyl-carrier-protein] 9-desaturase, chloroplastic"/>
    <property type="match status" value="1"/>
</dbReference>
<dbReference type="Gene3D" id="1.10.620.20">
    <property type="entry name" value="Ribonucleotide Reductase, subunit A"/>
    <property type="match status" value="1"/>
</dbReference>
<dbReference type="InterPro" id="IPR005803">
    <property type="entry name" value="FADS-2_CS"/>
</dbReference>
<dbReference type="InterPro" id="IPR005067">
    <property type="entry name" value="Fatty_acid_desaturase-2"/>
</dbReference>
<dbReference type="InterPro" id="IPR009078">
    <property type="entry name" value="Ferritin-like_SF"/>
</dbReference>
<dbReference type="InterPro" id="IPR012348">
    <property type="entry name" value="RNR-like"/>
</dbReference>
<dbReference type="PANTHER" id="PTHR31155">
    <property type="entry name" value="ACYL- ACYL-CARRIER-PROTEIN DESATURASE-RELATED"/>
    <property type="match status" value="1"/>
</dbReference>
<dbReference type="PANTHER" id="PTHR31155:SF9">
    <property type="entry name" value="STEAROYL-[ACYL-CARRIER-PROTEIN] 9-DESATURASE 7, CHLOROPLASTIC"/>
    <property type="match status" value="1"/>
</dbReference>
<dbReference type="Pfam" id="PF03405">
    <property type="entry name" value="FA_desaturase_2"/>
    <property type="match status" value="1"/>
</dbReference>
<dbReference type="PIRSF" id="PIRSF000346">
    <property type="entry name" value="Dlt9_acylACP_des"/>
    <property type="match status" value="1"/>
</dbReference>
<dbReference type="SUPFAM" id="SSF47240">
    <property type="entry name" value="Ferritin-like"/>
    <property type="match status" value="1"/>
</dbReference>
<dbReference type="PROSITE" id="PS00574">
    <property type="entry name" value="FATTY_ACID_DESATUR_2"/>
    <property type="match status" value="1"/>
</dbReference>
<sequence length="396" mass="45078">MAIRINTATFQSDLYRSFAFPQPKPLRSPKFAMASTIGSATTKVESTKKPFTPPREVHQQVLHSMPPQKIEIFKSMEGWAENNILVHLKPVEKCWQAQDFLPDPASDGFMEQVEELRARAKEIPDDYFVVLVGDMITEEALPTYQTMLNTLDGVRDETGATLLLGLVWTRAWTAEENRHGDLLHQYLYLSGRVDMRQIQKTIQYLIGSGMDPRTENSPYLGFIYTSFQERATFISHGNTARHAKEHGDVKLAQMCGIIAADEKRHETAYTKIVEKLFEIDPDGTVLAFADMMRKKISMPAHLMYDGRDDNLFENFSAVAQRLGVYTAKDYADILEFLVGRWKVADLTGLSGEGRKAQDYVCGLAPRIRRLEERNSARAKESVNVPFSWIFDREVKL</sequence>
<organism>
    <name type="scientific">Helianthus annuus</name>
    <name type="common">Common sunflower</name>
    <dbReference type="NCBI Taxonomy" id="4232"/>
    <lineage>
        <taxon>Eukaryota</taxon>
        <taxon>Viridiplantae</taxon>
        <taxon>Streptophyta</taxon>
        <taxon>Embryophyta</taxon>
        <taxon>Tracheophyta</taxon>
        <taxon>Spermatophyta</taxon>
        <taxon>Magnoliopsida</taxon>
        <taxon>eudicotyledons</taxon>
        <taxon>Gunneridae</taxon>
        <taxon>Pentapetalae</taxon>
        <taxon>asterids</taxon>
        <taxon>campanulids</taxon>
        <taxon>Asterales</taxon>
        <taxon>Asteraceae</taxon>
        <taxon>Asteroideae</taxon>
        <taxon>Heliantheae alliance</taxon>
        <taxon>Heliantheae</taxon>
        <taxon>Helianthus</taxon>
    </lineage>
</organism>
<feature type="transit peptide" description="Chloroplast" evidence="1">
    <location>
        <begin position="1"/>
        <end position="33"/>
    </location>
</feature>
<feature type="chain" id="PRO_0000007133" description="Stearoyl-[acyl-carrier-protein] 9-desaturase, chloroplastic">
    <location>
        <begin position="34"/>
        <end position="396"/>
    </location>
</feature>
<feature type="binding site" evidence="2">
    <location>
        <position position="138"/>
    </location>
    <ligand>
        <name>Fe cation</name>
        <dbReference type="ChEBI" id="CHEBI:24875"/>
        <label>1</label>
    </ligand>
</feature>
<feature type="binding site" evidence="2">
    <location>
        <position position="176"/>
    </location>
    <ligand>
        <name>Fe cation</name>
        <dbReference type="ChEBI" id="CHEBI:24875"/>
        <label>1</label>
    </ligand>
</feature>
<feature type="binding site" evidence="2">
    <location>
        <position position="176"/>
    </location>
    <ligand>
        <name>Fe cation</name>
        <dbReference type="ChEBI" id="CHEBI:24875"/>
        <label>2</label>
    </ligand>
</feature>
<feature type="binding site" evidence="2">
    <location>
        <position position="179"/>
    </location>
    <ligand>
        <name>Fe cation</name>
        <dbReference type="ChEBI" id="CHEBI:24875"/>
        <label>1</label>
    </ligand>
</feature>
<feature type="binding site" evidence="2">
    <location>
        <position position="229"/>
    </location>
    <ligand>
        <name>Fe cation</name>
        <dbReference type="ChEBI" id="CHEBI:24875"/>
        <label>2</label>
    </ligand>
</feature>
<feature type="binding site" evidence="2">
    <location>
        <position position="262"/>
    </location>
    <ligand>
        <name>Fe cation</name>
        <dbReference type="ChEBI" id="CHEBI:24875"/>
        <label>1</label>
    </ligand>
</feature>
<feature type="binding site" evidence="2">
    <location>
        <position position="262"/>
    </location>
    <ligand>
        <name>Fe cation</name>
        <dbReference type="ChEBI" id="CHEBI:24875"/>
        <label>2</label>
    </ligand>
</feature>
<feature type="binding site" evidence="2">
    <location>
        <position position="265"/>
    </location>
    <ligand>
        <name>Fe cation</name>
        <dbReference type="ChEBI" id="CHEBI:24875"/>
        <label>2</label>
    </ligand>
</feature>
<evidence type="ECO:0000250" key="1">
    <source>
        <dbReference type="UniProtKB" id="P22243"/>
    </source>
</evidence>
<evidence type="ECO:0000250" key="2">
    <source>
        <dbReference type="UniProtKB" id="P22337"/>
    </source>
</evidence>
<evidence type="ECO:0000305" key="3"/>
<keyword id="KW-0150">Chloroplast</keyword>
<keyword id="KW-0275">Fatty acid biosynthesis</keyword>
<keyword id="KW-0276">Fatty acid metabolism</keyword>
<keyword id="KW-0408">Iron</keyword>
<keyword id="KW-0444">Lipid biosynthesis</keyword>
<keyword id="KW-0443">Lipid metabolism</keyword>
<keyword id="KW-0479">Metal-binding</keyword>
<keyword id="KW-0560">Oxidoreductase</keyword>
<keyword id="KW-0934">Plastid</keyword>
<keyword id="KW-0809">Transit peptide</keyword>